<evidence type="ECO:0000255" key="1">
    <source>
        <dbReference type="HAMAP-Rule" id="MF_01361"/>
    </source>
</evidence>
<keyword id="KW-1003">Cell membrane</keyword>
<keyword id="KW-0472">Membrane</keyword>
<keyword id="KW-0812">Transmembrane</keyword>
<keyword id="KW-1133">Transmembrane helix</keyword>
<comment type="subcellular location">
    <subcellularLocation>
        <location evidence="1">Cell membrane</location>
        <topology evidence="1">Multi-pass membrane protein</topology>
    </subcellularLocation>
</comment>
<comment type="similarity">
    <text evidence="1">Belongs to the UPF0391 family.</text>
</comment>
<gene>
    <name type="ordered locus">GM21_0108</name>
</gene>
<accession>C6E8Q5</accession>
<organism>
    <name type="scientific">Geobacter sp. (strain M21)</name>
    <dbReference type="NCBI Taxonomy" id="443144"/>
    <lineage>
        <taxon>Bacteria</taxon>
        <taxon>Pseudomonadati</taxon>
        <taxon>Thermodesulfobacteriota</taxon>
        <taxon>Desulfuromonadia</taxon>
        <taxon>Geobacterales</taxon>
        <taxon>Geobacteraceae</taxon>
        <taxon>Geobacter</taxon>
    </lineage>
</organism>
<protein>
    <recommendedName>
        <fullName evidence="1">UPF0391 membrane protein GM21_0108</fullName>
    </recommendedName>
</protein>
<dbReference type="EMBL" id="CP001661">
    <property type="protein sequence ID" value="ACT16194.1"/>
    <property type="molecule type" value="Genomic_DNA"/>
</dbReference>
<dbReference type="STRING" id="443144.GM21_0108"/>
<dbReference type="KEGG" id="gem:GM21_0108"/>
<dbReference type="eggNOG" id="COG5487">
    <property type="taxonomic scope" value="Bacteria"/>
</dbReference>
<dbReference type="HOGENOM" id="CLU_187346_1_0_7"/>
<dbReference type="GO" id="GO:0005886">
    <property type="term" value="C:plasma membrane"/>
    <property type="evidence" value="ECO:0007669"/>
    <property type="project" value="UniProtKB-SubCell"/>
</dbReference>
<dbReference type="HAMAP" id="MF_01361">
    <property type="entry name" value="UPF0391"/>
    <property type="match status" value="1"/>
</dbReference>
<dbReference type="InterPro" id="IPR009760">
    <property type="entry name" value="DUF1328"/>
</dbReference>
<dbReference type="NCBIfam" id="NF010226">
    <property type="entry name" value="PRK13682.1-1"/>
    <property type="match status" value="1"/>
</dbReference>
<dbReference type="NCBIfam" id="NF010229">
    <property type="entry name" value="PRK13682.1-4"/>
    <property type="match status" value="1"/>
</dbReference>
<dbReference type="Pfam" id="PF07043">
    <property type="entry name" value="DUF1328"/>
    <property type="match status" value="1"/>
</dbReference>
<dbReference type="PIRSF" id="PIRSF036466">
    <property type="entry name" value="UCP036466"/>
    <property type="match status" value="1"/>
</dbReference>
<proteinExistence type="inferred from homology"/>
<feature type="chain" id="PRO_1000214875" description="UPF0391 membrane protein GM21_0108">
    <location>
        <begin position="1"/>
        <end position="58"/>
    </location>
</feature>
<feature type="transmembrane region" description="Helical" evidence="1">
    <location>
        <begin position="4"/>
        <end position="24"/>
    </location>
</feature>
<feature type="transmembrane region" description="Helical" evidence="1">
    <location>
        <begin position="33"/>
        <end position="53"/>
    </location>
</feature>
<name>Y108_GEOSM</name>
<reference key="1">
    <citation type="submission" date="2009-07" db="EMBL/GenBank/DDBJ databases">
        <title>Complete sequence of Geobacter sp. M21.</title>
        <authorList>
            <consortium name="US DOE Joint Genome Institute"/>
            <person name="Lucas S."/>
            <person name="Copeland A."/>
            <person name="Lapidus A."/>
            <person name="Glavina del Rio T."/>
            <person name="Dalin E."/>
            <person name="Tice H."/>
            <person name="Bruce D."/>
            <person name="Goodwin L."/>
            <person name="Pitluck S."/>
            <person name="Saunders E."/>
            <person name="Brettin T."/>
            <person name="Detter J.C."/>
            <person name="Han C."/>
            <person name="Larimer F."/>
            <person name="Land M."/>
            <person name="Hauser L."/>
            <person name="Kyrpides N."/>
            <person name="Ovchinnikova G."/>
            <person name="Lovley D."/>
        </authorList>
    </citation>
    <scope>NUCLEOTIDE SEQUENCE [LARGE SCALE GENOMIC DNA]</scope>
    <source>
        <strain>M21</strain>
    </source>
</reference>
<sequence length="58" mass="6156">MLRWALIFFIIAIIAAVFGFGGIATAAAGIAKVLFYLFLVVAVVMLVSALLAGRNLTR</sequence>